<evidence type="ECO:0000255" key="1">
    <source>
        <dbReference type="HAMAP-Rule" id="MF_00291"/>
    </source>
</evidence>
<evidence type="ECO:0000256" key="2">
    <source>
        <dbReference type="SAM" id="MobiDB-lite"/>
    </source>
</evidence>
<evidence type="ECO:0000305" key="3"/>
<gene>
    <name evidence="1" type="primary">rpsB</name>
    <name type="ordered locus">Rleg2_1583</name>
</gene>
<dbReference type="EMBL" id="CP001191">
    <property type="protein sequence ID" value="ACI54873.1"/>
    <property type="molecule type" value="Genomic_DNA"/>
</dbReference>
<dbReference type="RefSeq" id="WP_003573382.1">
    <property type="nucleotide sequence ID" value="NC_011369.1"/>
</dbReference>
<dbReference type="SMR" id="B5ZN83"/>
<dbReference type="STRING" id="395492.Rleg2_1583"/>
<dbReference type="GeneID" id="75219842"/>
<dbReference type="KEGG" id="rlt:Rleg2_1583"/>
<dbReference type="eggNOG" id="COG0052">
    <property type="taxonomic scope" value="Bacteria"/>
</dbReference>
<dbReference type="HOGENOM" id="CLU_040318_2_1_5"/>
<dbReference type="Proteomes" id="UP000008330">
    <property type="component" value="Chromosome"/>
</dbReference>
<dbReference type="GO" id="GO:0022627">
    <property type="term" value="C:cytosolic small ribosomal subunit"/>
    <property type="evidence" value="ECO:0007669"/>
    <property type="project" value="TreeGrafter"/>
</dbReference>
<dbReference type="GO" id="GO:0003735">
    <property type="term" value="F:structural constituent of ribosome"/>
    <property type="evidence" value="ECO:0007669"/>
    <property type="project" value="InterPro"/>
</dbReference>
<dbReference type="GO" id="GO:0006412">
    <property type="term" value="P:translation"/>
    <property type="evidence" value="ECO:0007669"/>
    <property type="project" value="UniProtKB-UniRule"/>
</dbReference>
<dbReference type="CDD" id="cd01425">
    <property type="entry name" value="RPS2"/>
    <property type="match status" value="1"/>
</dbReference>
<dbReference type="FunFam" id="1.10.287.610:FF:000001">
    <property type="entry name" value="30S ribosomal protein S2"/>
    <property type="match status" value="1"/>
</dbReference>
<dbReference type="Gene3D" id="3.40.50.10490">
    <property type="entry name" value="Glucose-6-phosphate isomerase like protein, domain 1"/>
    <property type="match status" value="1"/>
</dbReference>
<dbReference type="Gene3D" id="1.10.287.610">
    <property type="entry name" value="Helix hairpin bin"/>
    <property type="match status" value="1"/>
</dbReference>
<dbReference type="HAMAP" id="MF_00291_B">
    <property type="entry name" value="Ribosomal_uS2_B"/>
    <property type="match status" value="1"/>
</dbReference>
<dbReference type="InterPro" id="IPR001865">
    <property type="entry name" value="Ribosomal_uS2"/>
</dbReference>
<dbReference type="InterPro" id="IPR005706">
    <property type="entry name" value="Ribosomal_uS2_bac/mit/plastid"/>
</dbReference>
<dbReference type="InterPro" id="IPR018130">
    <property type="entry name" value="Ribosomal_uS2_CS"/>
</dbReference>
<dbReference type="InterPro" id="IPR023591">
    <property type="entry name" value="Ribosomal_uS2_flav_dom_sf"/>
</dbReference>
<dbReference type="NCBIfam" id="TIGR01011">
    <property type="entry name" value="rpsB_bact"/>
    <property type="match status" value="1"/>
</dbReference>
<dbReference type="PANTHER" id="PTHR12534">
    <property type="entry name" value="30S RIBOSOMAL PROTEIN S2 PROKARYOTIC AND ORGANELLAR"/>
    <property type="match status" value="1"/>
</dbReference>
<dbReference type="PANTHER" id="PTHR12534:SF0">
    <property type="entry name" value="SMALL RIBOSOMAL SUBUNIT PROTEIN US2M"/>
    <property type="match status" value="1"/>
</dbReference>
<dbReference type="Pfam" id="PF00318">
    <property type="entry name" value="Ribosomal_S2"/>
    <property type="match status" value="1"/>
</dbReference>
<dbReference type="PRINTS" id="PR00395">
    <property type="entry name" value="RIBOSOMALS2"/>
</dbReference>
<dbReference type="SUPFAM" id="SSF52313">
    <property type="entry name" value="Ribosomal protein S2"/>
    <property type="match status" value="1"/>
</dbReference>
<dbReference type="PROSITE" id="PS00962">
    <property type="entry name" value="RIBOSOMAL_S2_1"/>
    <property type="match status" value="1"/>
</dbReference>
<dbReference type="PROSITE" id="PS00963">
    <property type="entry name" value="RIBOSOMAL_S2_2"/>
    <property type="match status" value="1"/>
</dbReference>
<organism>
    <name type="scientific">Rhizobium leguminosarum bv. trifolii (strain WSM2304)</name>
    <dbReference type="NCBI Taxonomy" id="395492"/>
    <lineage>
        <taxon>Bacteria</taxon>
        <taxon>Pseudomonadati</taxon>
        <taxon>Pseudomonadota</taxon>
        <taxon>Alphaproteobacteria</taxon>
        <taxon>Hyphomicrobiales</taxon>
        <taxon>Rhizobiaceae</taxon>
        <taxon>Rhizobium/Agrobacterium group</taxon>
        <taxon>Rhizobium</taxon>
    </lineage>
</organism>
<feature type="chain" id="PRO_1000115047" description="Small ribosomal subunit protein uS2">
    <location>
        <begin position="1"/>
        <end position="255"/>
    </location>
</feature>
<feature type="region of interest" description="Disordered" evidence="2">
    <location>
        <begin position="230"/>
        <end position="255"/>
    </location>
</feature>
<sequence length="255" mass="28246">MALPDFSMRQLLEAGVHFGHQTHRWNPKMKPYIFGDRNNIHIIDLAQTVPMLSRALQVVSDTVARGGRVLFVGTKRQASEIIADSAKRSAQYYVNSRWLGGMMTNWKTISNSIQRLRKLDEILNGEAQGFTKKERLNLEREREKLDKALGGIRDMGGTPDLMFIIDTNKEKIAIDEAKRLGIPVVAIIDSNCDPDLIDYPIPGNDDASRAIALYCELISRAAIDGIARQQSSSGRDLGASSEVPVEPALEEAAEG</sequence>
<comment type="similarity">
    <text evidence="1">Belongs to the universal ribosomal protein uS2 family.</text>
</comment>
<accession>B5ZN83</accession>
<proteinExistence type="inferred from homology"/>
<reference key="1">
    <citation type="journal article" date="2010" name="Stand. Genomic Sci.">
        <title>Complete genome sequence of Rhizobium leguminosarum bv trifolii strain WSM2304, an effective microsymbiont of the South American clover Trifolium polymorphum.</title>
        <authorList>
            <person name="Reeve W."/>
            <person name="O'Hara G."/>
            <person name="Chain P."/>
            <person name="Ardley J."/>
            <person name="Brau L."/>
            <person name="Nandesena K."/>
            <person name="Tiwari R."/>
            <person name="Malfatti S."/>
            <person name="Kiss H."/>
            <person name="Lapidus A."/>
            <person name="Copeland A."/>
            <person name="Nolan M."/>
            <person name="Land M."/>
            <person name="Ivanova N."/>
            <person name="Mavromatis K."/>
            <person name="Markowitz V."/>
            <person name="Kyrpides N."/>
            <person name="Melino V."/>
            <person name="Denton M."/>
            <person name="Yates R."/>
            <person name="Howieson J."/>
        </authorList>
    </citation>
    <scope>NUCLEOTIDE SEQUENCE [LARGE SCALE GENOMIC DNA]</scope>
    <source>
        <strain>WSM2304</strain>
    </source>
</reference>
<name>RS2_RHILW</name>
<keyword id="KW-1185">Reference proteome</keyword>
<keyword id="KW-0687">Ribonucleoprotein</keyword>
<keyword id="KW-0689">Ribosomal protein</keyword>
<protein>
    <recommendedName>
        <fullName evidence="1">Small ribosomal subunit protein uS2</fullName>
    </recommendedName>
    <alternativeName>
        <fullName evidence="3">30S ribosomal protein S2</fullName>
    </alternativeName>
</protein>